<keyword id="KW-0025">Alternative splicing</keyword>
<keyword id="KW-0965">Cell junction</keyword>
<keyword id="KW-1003">Cell membrane</keyword>
<keyword id="KW-0406">Ion transport</keyword>
<keyword id="KW-0472">Membrane</keyword>
<keyword id="KW-1185">Reference proteome</keyword>
<keyword id="KW-0796">Tight junction</keyword>
<keyword id="KW-0812">Transmembrane</keyword>
<keyword id="KW-1133">Transmembrane helix</keyword>
<keyword id="KW-0813">Transport</keyword>
<proteinExistence type="evidence at transcript level"/>
<sequence>MASTASEIIAFMVSISGWVLVSSTLPTDYWKVSTIDGTVITTATYWANLWKTCVTDSTGVSNCKDFPSMLALDGYIQACRGLMIAAVSLGFFGSIFALIGMKCTKVGGSDKAKAKIACLAGIVFILSGLCSMTGCSLYANKITTEFFDPLFVEQKYELGAALFIGWAGASLCLIGGVIFCFSISDNNKAPRMGYTYNGATSVMSSRTKYHGREGDLKTPNPSKQFDKNAYV</sequence>
<dbReference type="EMBL" id="BT020910">
    <property type="protein sequence ID" value="AAX08927.1"/>
    <property type="molecule type" value="mRNA"/>
</dbReference>
<dbReference type="EMBL" id="DAAA02034568">
    <property type="status" value="NOT_ANNOTATED_CDS"/>
    <property type="molecule type" value="Genomic_DNA"/>
</dbReference>
<dbReference type="EMBL" id="DAAA02034569">
    <property type="status" value="NOT_ANNOTATED_CDS"/>
    <property type="molecule type" value="Genomic_DNA"/>
</dbReference>
<dbReference type="EMBL" id="DAAA02034570">
    <property type="status" value="NOT_ANNOTATED_CDS"/>
    <property type="molecule type" value="Genomic_DNA"/>
</dbReference>
<dbReference type="EMBL" id="DAAA02034571">
    <property type="status" value="NOT_ANNOTATED_CDS"/>
    <property type="molecule type" value="Genomic_DNA"/>
</dbReference>
<dbReference type="EMBL" id="DAAA02034572">
    <property type="status" value="NOT_ANNOTATED_CDS"/>
    <property type="molecule type" value="Genomic_DNA"/>
</dbReference>
<dbReference type="EMBL" id="BC153270">
    <property type="protein sequence ID" value="AAI53271.1"/>
    <property type="molecule type" value="mRNA"/>
</dbReference>
<dbReference type="RefSeq" id="NP_001014857.1">
    <molecule id="Q5E9L0-1"/>
    <property type="nucleotide sequence ID" value="NM_001014857.1"/>
</dbReference>
<dbReference type="RefSeq" id="NP_001099079.1">
    <molecule id="Q5E9L0-2"/>
    <property type="nucleotide sequence ID" value="NM_001105609.2"/>
</dbReference>
<dbReference type="SMR" id="Q5E9L0"/>
<dbReference type="FunCoup" id="Q5E9L0">
    <property type="interactions" value="250"/>
</dbReference>
<dbReference type="STRING" id="9913.ENSBTAP00000004641"/>
<dbReference type="PaxDb" id="9913-ENSBTAP00000004641"/>
<dbReference type="Ensembl" id="ENSBTAT00000056559.3">
    <molecule id="Q5E9L0-1"/>
    <property type="protein sequence ID" value="ENSBTAP00000048962.2"/>
    <property type="gene ID" value="ENSBTAG00000003568.5"/>
</dbReference>
<dbReference type="GeneID" id="506545"/>
<dbReference type="KEGG" id="bta:506545"/>
<dbReference type="CTD" id="9071"/>
<dbReference type="VEuPathDB" id="HostDB:ENSBTAG00000003568"/>
<dbReference type="eggNOG" id="ENOG502QPNP">
    <property type="taxonomic scope" value="Eukaryota"/>
</dbReference>
<dbReference type="GeneTree" id="ENSGT00940000155232"/>
<dbReference type="HOGENOM" id="CLU_076370_0_0_1"/>
<dbReference type="InParanoid" id="Q5E9L0"/>
<dbReference type="OMA" id="CKEFISM"/>
<dbReference type="OrthoDB" id="9936647at2759"/>
<dbReference type="TreeFam" id="TF331936"/>
<dbReference type="Proteomes" id="UP000009136">
    <property type="component" value="Chromosome 12"/>
</dbReference>
<dbReference type="Bgee" id="ENSBTAG00000003568">
    <property type="expression patterns" value="Expressed in prostate gland and 83 other cell types or tissues"/>
</dbReference>
<dbReference type="GO" id="GO:0005923">
    <property type="term" value="C:bicellular tight junction"/>
    <property type="evidence" value="ECO:0000318"/>
    <property type="project" value="GO_Central"/>
</dbReference>
<dbReference type="GO" id="GO:0005737">
    <property type="term" value="C:cytoplasm"/>
    <property type="evidence" value="ECO:0007669"/>
    <property type="project" value="Ensembl"/>
</dbReference>
<dbReference type="GO" id="GO:0005886">
    <property type="term" value="C:plasma membrane"/>
    <property type="evidence" value="ECO:0000318"/>
    <property type="project" value="GO_Central"/>
</dbReference>
<dbReference type="GO" id="GO:0005198">
    <property type="term" value="F:structural molecule activity"/>
    <property type="evidence" value="ECO:0007669"/>
    <property type="project" value="InterPro"/>
</dbReference>
<dbReference type="GO" id="GO:0070830">
    <property type="term" value="P:bicellular tight junction assembly"/>
    <property type="evidence" value="ECO:0000318"/>
    <property type="project" value="GO_Central"/>
</dbReference>
<dbReference type="GO" id="GO:0007155">
    <property type="term" value="P:cell adhesion"/>
    <property type="evidence" value="ECO:0000318"/>
    <property type="project" value="GO_Central"/>
</dbReference>
<dbReference type="GO" id="GO:0006811">
    <property type="term" value="P:monoatomic ion transport"/>
    <property type="evidence" value="ECO:0007669"/>
    <property type="project" value="UniProtKB-KW"/>
</dbReference>
<dbReference type="GO" id="GO:0043269">
    <property type="term" value="P:regulation of monoatomic ion transport"/>
    <property type="evidence" value="ECO:0000250"/>
    <property type="project" value="UniProtKB"/>
</dbReference>
<dbReference type="FunFam" id="1.20.140.150:FF:000001">
    <property type="entry name" value="Claudin"/>
    <property type="match status" value="1"/>
</dbReference>
<dbReference type="Gene3D" id="1.20.140.150">
    <property type="match status" value="1"/>
</dbReference>
<dbReference type="InterPro" id="IPR006187">
    <property type="entry name" value="Claudin"/>
</dbReference>
<dbReference type="InterPro" id="IPR003554">
    <property type="entry name" value="Claudin10"/>
</dbReference>
<dbReference type="InterPro" id="IPR017974">
    <property type="entry name" value="Claudin_CS"/>
</dbReference>
<dbReference type="InterPro" id="IPR004031">
    <property type="entry name" value="PMP22/EMP/MP20/Claudin"/>
</dbReference>
<dbReference type="PANTHER" id="PTHR12002">
    <property type="entry name" value="CLAUDIN"/>
    <property type="match status" value="1"/>
</dbReference>
<dbReference type="Pfam" id="PF00822">
    <property type="entry name" value="PMP22_Claudin"/>
    <property type="match status" value="1"/>
</dbReference>
<dbReference type="PRINTS" id="PR01077">
    <property type="entry name" value="CLAUDIN"/>
</dbReference>
<dbReference type="PRINTS" id="PR01383">
    <property type="entry name" value="CLAUDIN10"/>
</dbReference>
<dbReference type="PROSITE" id="PS01346">
    <property type="entry name" value="CLAUDIN"/>
    <property type="match status" value="1"/>
</dbReference>
<organism>
    <name type="scientific">Bos taurus</name>
    <name type="common">Bovine</name>
    <dbReference type="NCBI Taxonomy" id="9913"/>
    <lineage>
        <taxon>Eukaryota</taxon>
        <taxon>Metazoa</taxon>
        <taxon>Chordata</taxon>
        <taxon>Craniata</taxon>
        <taxon>Vertebrata</taxon>
        <taxon>Euteleostomi</taxon>
        <taxon>Mammalia</taxon>
        <taxon>Eutheria</taxon>
        <taxon>Laurasiatheria</taxon>
        <taxon>Artiodactyla</taxon>
        <taxon>Ruminantia</taxon>
        <taxon>Pecora</taxon>
        <taxon>Bovidae</taxon>
        <taxon>Bovinae</taxon>
        <taxon>Bos</taxon>
    </lineage>
</organism>
<accession>Q5E9L0</accession>
<accession>A7Z072</accession>
<name>CLD10_BOVIN</name>
<comment type="function">
    <text evidence="2 3">Forms paracellular channels: polymerizes in tight junction strands with cation- and anion-selective channels through the strands, conveying epithelial permeability in a process known as paracellular tight junction permeability (By similarity). In sweat glands and in the thick ascending limb (TAL) of Henle's loop in kidney, it controls paracellular sodium permeability which is essential for proper sweat production and renal function (By similarity). In renal proximal tubules, it conveys selective chloride over hydrogencarbonate anion permeability which is required for renal chloride reabsorption and salt homeostasis (By similarity).</text>
</comment>
<comment type="catalytic activity">
    <reaction evidence="2">
        <text>Na(+)(in) = Na(+)(out)</text>
        <dbReference type="Rhea" id="RHEA:34963"/>
        <dbReference type="ChEBI" id="CHEBI:29101"/>
    </reaction>
</comment>
<comment type="catalytic activity">
    <reaction evidence="2">
        <text>Li(+)(in) = Li(+)(out)</text>
        <dbReference type="Rhea" id="RHEA:78551"/>
        <dbReference type="ChEBI" id="CHEBI:49713"/>
    </reaction>
</comment>
<comment type="catalytic activity">
    <reaction evidence="2">
        <text>K(+)(in) = K(+)(out)</text>
        <dbReference type="Rhea" id="RHEA:29463"/>
        <dbReference type="ChEBI" id="CHEBI:29103"/>
    </reaction>
</comment>
<comment type="catalytic activity">
    <reaction evidence="2">
        <text>Rb(+)(in) = Rb(+)(out)</text>
        <dbReference type="Rhea" id="RHEA:78547"/>
        <dbReference type="ChEBI" id="CHEBI:49847"/>
    </reaction>
</comment>
<comment type="catalytic activity">
    <reaction evidence="2">
        <text>Cs(+)(in) = Cs(+)(out)</text>
        <dbReference type="Rhea" id="RHEA:78555"/>
        <dbReference type="ChEBI" id="CHEBI:49547"/>
    </reaction>
</comment>
<comment type="catalytic activity">
    <reaction evidence="2">
        <text>NH4(+)(in) = NH4(+)(out)</text>
        <dbReference type="Rhea" id="RHEA:28747"/>
        <dbReference type="ChEBI" id="CHEBI:28938"/>
    </reaction>
</comment>
<comment type="catalytic activity">
    <reaction evidence="2">
        <text>methylamine(out) = methylamine(in)</text>
        <dbReference type="Rhea" id="RHEA:74391"/>
        <dbReference type="ChEBI" id="CHEBI:59338"/>
    </reaction>
</comment>
<comment type="catalytic activity">
    <reaction evidence="2">
        <text>Mg(2+)(in) = Mg(2+)(out)</text>
        <dbReference type="Rhea" id="RHEA:29827"/>
        <dbReference type="ChEBI" id="CHEBI:18420"/>
    </reaction>
</comment>
<comment type="catalytic activity">
    <reaction evidence="2">
        <text>Ca(2+)(in) = Ca(2+)(out)</text>
        <dbReference type="Rhea" id="RHEA:29671"/>
        <dbReference type="ChEBI" id="CHEBI:29108"/>
    </reaction>
</comment>
<comment type="catalytic activity">
    <reaction evidence="2">
        <text>Sr(2+)(in) = Sr(2+)(out)</text>
        <dbReference type="Rhea" id="RHEA:78679"/>
        <dbReference type="ChEBI" id="CHEBI:35104"/>
    </reaction>
</comment>
<comment type="catalytic activity">
    <reaction evidence="3">
        <text>chloride(in) = chloride(out)</text>
        <dbReference type="Rhea" id="RHEA:29823"/>
        <dbReference type="ChEBI" id="CHEBI:17996"/>
    </reaction>
</comment>
<comment type="catalytic activity">
    <reaction evidence="2">
        <text>nitrate(in) = nitrate(out)</text>
        <dbReference type="Rhea" id="RHEA:34923"/>
        <dbReference type="ChEBI" id="CHEBI:17632"/>
    </reaction>
</comment>
<comment type="subunit">
    <text evidence="2">Can form homodimers both in trans (interaction between CLDN10 molecules in opposing membranes) and in cis (interaction between CLDN10 molecules within one membrane). Interacts with CLDN19.</text>
</comment>
<comment type="subcellular location">
    <subcellularLocation>
        <location evidence="2">Cell junction</location>
        <location evidence="2">Tight junction</location>
    </subcellularLocation>
    <subcellularLocation>
        <location evidence="2">Cell membrane</location>
        <topology evidence="4">Multi-pass membrane protein</topology>
    </subcellularLocation>
</comment>
<comment type="alternative products">
    <event type="alternative splicing"/>
    <isoform>
        <id>Q5E9L0-1</id>
        <name>1</name>
        <sequence type="displayed"/>
    </isoform>
    <isoform>
        <id>Q5E9L0-2</id>
        <name>2</name>
        <sequence type="described" ref="VSP_053549"/>
    </isoform>
</comment>
<comment type="domain">
    <text evidence="1">The fourth transmembrane region (161-181) is necessary for integration into tight junctions.</text>
</comment>
<comment type="similarity">
    <text evidence="6">Belongs to the claudin family.</text>
</comment>
<protein>
    <recommendedName>
        <fullName>Claudin-10</fullName>
    </recommendedName>
</protein>
<reference key="1">
    <citation type="journal article" date="2005" name="BMC Genomics">
        <title>Characterization of 954 bovine full-CDS cDNA sequences.</title>
        <authorList>
            <person name="Harhay G.P."/>
            <person name="Sonstegard T.S."/>
            <person name="Keele J.W."/>
            <person name="Heaton M.P."/>
            <person name="Clawson M.L."/>
            <person name="Snelling W.M."/>
            <person name="Wiedmann R.T."/>
            <person name="Van Tassell C.P."/>
            <person name="Smith T.P.L."/>
        </authorList>
    </citation>
    <scope>NUCLEOTIDE SEQUENCE [LARGE SCALE MRNA] (ISOFORM 1)</scope>
</reference>
<reference key="2">
    <citation type="journal article" date="2009" name="Genome Biol.">
        <title>A whole-genome assembly of the domestic cow, Bos taurus.</title>
        <authorList>
            <person name="Zimin A.V."/>
            <person name="Delcher A.L."/>
            <person name="Florea L."/>
            <person name="Kelley D.R."/>
            <person name="Schatz M.C."/>
            <person name="Puiu D."/>
            <person name="Hanrahan F."/>
            <person name="Pertea G."/>
            <person name="Van Tassell C.P."/>
            <person name="Sonstegard T.S."/>
            <person name="Marcais G."/>
            <person name="Roberts M."/>
            <person name="Subramanian P."/>
            <person name="Yorke J.A."/>
            <person name="Salzberg S.L."/>
        </authorList>
    </citation>
    <scope>NUCLEOTIDE SEQUENCE [LARGE SCALE GENOMIC DNA]</scope>
    <source>
        <strain>Hereford</strain>
    </source>
</reference>
<reference key="3">
    <citation type="submission" date="2007-09" db="EMBL/GenBank/DDBJ databases">
        <authorList>
            <consortium name="NIH - Mammalian Gene Collection (MGC) project"/>
        </authorList>
    </citation>
    <scope>NUCLEOTIDE SEQUENCE [LARGE SCALE MRNA] (ISOFORM 2)</scope>
    <source>
        <strain>Hereford</strain>
        <tissue>Kidney</tissue>
    </source>
</reference>
<evidence type="ECO:0000250" key="1"/>
<evidence type="ECO:0000250" key="2">
    <source>
        <dbReference type="UniProtKB" id="P78369"/>
    </source>
</evidence>
<evidence type="ECO:0000250" key="3">
    <source>
        <dbReference type="UniProtKB" id="Q9Z0S6"/>
    </source>
</evidence>
<evidence type="ECO:0000255" key="4"/>
<evidence type="ECO:0000303" key="5">
    <source ref="3"/>
</evidence>
<evidence type="ECO:0000305" key="6"/>
<gene>
    <name type="primary">CLDN10</name>
</gene>
<feature type="chain" id="PRO_0000244418" description="Claudin-10">
    <location>
        <begin position="1"/>
        <end position="231"/>
    </location>
</feature>
<feature type="transmembrane region" description="Helical" evidence="4">
    <location>
        <begin position="1"/>
        <end position="21"/>
    </location>
</feature>
<feature type="topological domain" description="Extracellular" evidence="4">
    <location>
        <begin position="22"/>
        <end position="80"/>
    </location>
</feature>
<feature type="transmembrane region" description="Helical" evidence="4">
    <location>
        <begin position="81"/>
        <end position="101"/>
    </location>
</feature>
<feature type="topological domain" description="Cytoplasmic" evidence="4">
    <location>
        <begin position="102"/>
        <end position="115"/>
    </location>
</feature>
<feature type="transmembrane region" description="Helical" evidence="4">
    <location>
        <begin position="116"/>
        <end position="136"/>
    </location>
</feature>
<feature type="topological domain" description="Extracellular" evidence="4">
    <location>
        <begin position="137"/>
        <end position="160"/>
    </location>
</feature>
<feature type="transmembrane region" description="Helical" evidence="4">
    <location>
        <begin position="161"/>
        <end position="181"/>
    </location>
</feature>
<feature type="topological domain" description="Cytoplasmic" evidence="4">
    <location>
        <begin position="182"/>
        <end position="231"/>
    </location>
</feature>
<feature type="splice variant" id="VSP_053549" description="In isoform 2." evidence="5">
    <original>MASTASEIIAFMVSISGWVLVSSTLPTDYWKVSTIDGTVITTATYWANLWKTCVTDSTGVSNCKDFPSMLALD</original>
    <variation>MSRAQISALVFGVGGFGALVAATASNEWKVTTRASSVITATWVYQGLWMNCAGNALGSFHCRPHFTIFKVE</variation>
    <location>
        <begin position="1"/>
        <end position="73"/>
    </location>
</feature>